<gene>
    <name evidence="1" type="primary">rplV</name>
    <name type="ordered locus">SPA3301</name>
</gene>
<keyword id="KW-0687">Ribonucleoprotein</keyword>
<keyword id="KW-0689">Ribosomal protein</keyword>
<keyword id="KW-0694">RNA-binding</keyword>
<keyword id="KW-0699">rRNA-binding</keyword>
<reference key="1">
    <citation type="journal article" date="2004" name="Nat. Genet.">
        <title>Comparison of genome degradation in Paratyphi A and Typhi, human-restricted serovars of Salmonella enterica that cause typhoid.</title>
        <authorList>
            <person name="McClelland M."/>
            <person name="Sanderson K.E."/>
            <person name="Clifton S.W."/>
            <person name="Latreille P."/>
            <person name="Porwollik S."/>
            <person name="Sabo A."/>
            <person name="Meyer R."/>
            <person name="Bieri T."/>
            <person name="Ozersky P."/>
            <person name="McLellan M."/>
            <person name="Harkins C.R."/>
            <person name="Wang C."/>
            <person name="Nguyen C."/>
            <person name="Berghoff A."/>
            <person name="Elliott G."/>
            <person name="Kohlberg S."/>
            <person name="Strong C."/>
            <person name="Du F."/>
            <person name="Carter J."/>
            <person name="Kremizki C."/>
            <person name="Layman D."/>
            <person name="Leonard S."/>
            <person name="Sun H."/>
            <person name="Fulton L."/>
            <person name="Nash W."/>
            <person name="Miner T."/>
            <person name="Minx P."/>
            <person name="Delehaunty K."/>
            <person name="Fronick C."/>
            <person name="Magrini V."/>
            <person name="Nhan M."/>
            <person name="Warren W."/>
            <person name="Florea L."/>
            <person name="Spieth J."/>
            <person name="Wilson R.K."/>
        </authorList>
    </citation>
    <scope>NUCLEOTIDE SEQUENCE [LARGE SCALE GENOMIC DNA]</scope>
    <source>
        <strain>ATCC 9150 / SARB42</strain>
    </source>
</reference>
<feature type="chain" id="PRO_0000243203" description="Large ribosomal subunit protein uL22">
    <location>
        <begin position="1"/>
        <end position="110"/>
    </location>
</feature>
<protein>
    <recommendedName>
        <fullName evidence="1">Large ribosomal subunit protein uL22</fullName>
    </recommendedName>
    <alternativeName>
        <fullName evidence="2">50S ribosomal protein L22</fullName>
    </alternativeName>
</protein>
<name>RL22_SALPA</name>
<comment type="function">
    <text evidence="1">This protein binds specifically to 23S rRNA; its binding is stimulated by other ribosomal proteins, e.g. L4, L17, and L20. It is important during the early stages of 50S assembly. It makes multiple contacts with different domains of the 23S rRNA in the assembled 50S subunit and ribosome (By similarity).</text>
</comment>
<comment type="function">
    <text evidence="1">The globular domain of the protein is located near the polypeptide exit tunnel on the outside of the subunit, while an extended beta-hairpin is found that lines the wall of the exit tunnel in the center of the 70S ribosome.</text>
</comment>
<comment type="subunit">
    <text evidence="1">Part of the 50S ribosomal subunit.</text>
</comment>
<comment type="similarity">
    <text evidence="1">Belongs to the universal ribosomal protein uL22 family.</text>
</comment>
<organism>
    <name type="scientific">Salmonella paratyphi A (strain ATCC 9150 / SARB42)</name>
    <dbReference type="NCBI Taxonomy" id="295319"/>
    <lineage>
        <taxon>Bacteria</taxon>
        <taxon>Pseudomonadati</taxon>
        <taxon>Pseudomonadota</taxon>
        <taxon>Gammaproteobacteria</taxon>
        <taxon>Enterobacterales</taxon>
        <taxon>Enterobacteriaceae</taxon>
        <taxon>Salmonella</taxon>
    </lineage>
</organism>
<accession>Q5PIV7</accession>
<proteinExistence type="inferred from homology"/>
<dbReference type="EMBL" id="CP000026">
    <property type="protein sequence ID" value="AAV79117.1"/>
    <property type="molecule type" value="Genomic_DNA"/>
</dbReference>
<dbReference type="RefSeq" id="WP_000447529.1">
    <property type="nucleotide sequence ID" value="NC_006511.1"/>
</dbReference>
<dbReference type="SMR" id="Q5PIV7"/>
<dbReference type="GeneID" id="93778672"/>
<dbReference type="KEGG" id="spt:SPA3301"/>
<dbReference type="HOGENOM" id="CLU_083987_3_3_6"/>
<dbReference type="Proteomes" id="UP000008185">
    <property type="component" value="Chromosome"/>
</dbReference>
<dbReference type="GO" id="GO:0022625">
    <property type="term" value="C:cytosolic large ribosomal subunit"/>
    <property type="evidence" value="ECO:0007669"/>
    <property type="project" value="TreeGrafter"/>
</dbReference>
<dbReference type="GO" id="GO:0019843">
    <property type="term" value="F:rRNA binding"/>
    <property type="evidence" value="ECO:0007669"/>
    <property type="project" value="UniProtKB-UniRule"/>
</dbReference>
<dbReference type="GO" id="GO:0003735">
    <property type="term" value="F:structural constituent of ribosome"/>
    <property type="evidence" value="ECO:0007669"/>
    <property type="project" value="InterPro"/>
</dbReference>
<dbReference type="GO" id="GO:0006412">
    <property type="term" value="P:translation"/>
    <property type="evidence" value="ECO:0007669"/>
    <property type="project" value="UniProtKB-UniRule"/>
</dbReference>
<dbReference type="CDD" id="cd00336">
    <property type="entry name" value="Ribosomal_L22"/>
    <property type="match status" value="1"/>
</dbReference>
<dbReference type="FunFam" id="3.90.470.10:FF:000001">
    <property type="entry name" value="50S ribosomal protein L22"/>
    <property type="match status" value="1"/>
</dbReference>
<dbReference type="Gene3D" id="3.90.470.10">
    <property type="entry name" value="Ribosomal protein L22/L17"/>
    <property type="match status" value="1"/>
</dbReference>
<dbReference type="HAMAP" id="MF_01331_B">
    <property type="entry name" value="Ribosomal_uL22_B"/>
    <property type="match status" value="1"/>
</dbReference>
<dbReference type="InterPro" id="IPR001063">
    <property type="entry name" value="Ribosomal_uL22"/>
</dbReference>
<dbReference type="InterPro" id="IPR005727">
    <property type="entry name" value="Ribosomal_uL22_bac/chlpt-type"/>
</dbReference>
<dbReference type="InterPro" id="IPR047867">
    <property type="entry name" value="Ribosomal_uL22_bac/org-type"/>
</dbReference>
<dbReference type="InterPro" id="IPR018260">
    <property type="entry name" value="Ribosomal_uL22_CS"/>
</dbReference>
<dbReference type="InterPro" id="IPR036394">
    <property type="entry name" value="Ribosomal_uL22_sf"/>
</dbReference>
<dbReference type="NCBIfam" id="TIGR01044">
    <property type="entry name" value="rplV_bact"/>
    <property type="match status" value="1"/>
</dbReference>
<dbReference type="PANTHER" id="PTHR13501">
    <property type="entry name" value="CHLOROPLAST 50S RIBOSOMAL PROTEIN L22-RELATED"/>
    <property type="match status" value="1"/>
</dbReference>
<dbReference type="PANTHER" id="PTHR13501:SF8">
    <property type="entry name" value="LARGE RIBOSOMAL SUBUNIT PROTEIN UL22M"/>
    <property type="match status" value="1"/>
</dbReference>
<dbReference type="Pfam" id="PF00237">
    <property type="entry name" value="Ribosomal_L22"/>
    <property type="match status" value="1"/>
</dbReference>
<dbReference type="SUPFAM" id="SSF54843">
    <property type="entry name" value="Ribosomal protein L22"/>
    <property type="match status" value="1"/>
</dbReference>
<dbReference type="PROSITE" id="PS00464">
    <property type="entry name" value="RIBOSOMAL_L22"/>
    <property type="match status" value="1"/>
</dbReference>
<evidence type="ECO:0000255" key="1">
    <source>
        <dbReference type="HAMAP-Rule" id="MF_01331"/>
    </source>
</evidence>
<evidence type="ECO:0000305" key="2"/>
<sequence length="110" mass="12226">METIAKHRHARSSAQKVRLVADLIRGKKVSQALDILTYTNKKAAVLVKKVLESAIANAEHNDGADIDDLKVTKIFVDEGPSMKRIMPRAKGRADRILKRTSHITVVVSDR</sequence>